<dbReference type="EMBL" id="Y09597">
    <property type="protein sequence ID" value="CAA70785.1"/>
    <property type="molecule type" value="mRNA"/>
</dbReference>
<dbReference type="RefSeq" id="NP_990407.1">
    <property type="nucleotide sequence ID" value="NM_205076.1"/>
</dbReference>
<dbReference type="RefSeq" id="XP_046790136.1">
    <property type="nucleotide sequence ID" value="XM_046934180.1"/>
</dbReference>
<dbReference type="SMR" id="P79766"/>
<dbReference type="FunCoup" id="P79766">
    <property type="interactions" value="171"/>
</dbReference>
<dbReference type="STRING" id="9031.ENSGALP00000054770"/>
<dbReference type="PaxDb" id="9031-ENSGALP00000040481"/>
<dbReference type="GeneID" id="395959"/>
<dbReference type="KEGG" id="gga:395959"/>
<dbReference type="CTD" id="58158"/>
<dbReference type="VEuPathDB" id="HostDB:geneid_395959"/>
<dbReference type="eggNOG" id="KOG3898">
    <property type="taxonomic scope" value="Eukaryota"/>
</dbReference>
<dbReference type="InParanoid" id="P79766"/>
<dbReference type="OMA" id="TFMAHYP"/>
<dbReference type="OrthoDB" id="10039134at2759"/>
<dbReference type="PhylomeDB" id="P79766"/>
<dbReference type="PRO" id="PR:P79766"/>
<dbReference type="Proteomes" id="UP000000539">
    <property type="component" value="Unassembled WGS sequence"/>
</dbReference>
<dbReference type="GO" id="GO:0005634">
    <property type="term" value="C:nucleus"/>
    <property type="evidence" value="ECO:0000318"/>
    <property type="project" value="GO_Central"/>
</dbReference>
<dbReference type="GO" id="GO:0000981">
    <property type="term" value="F:DNA-binding transcription factor activity, RNA polymerase II-specific"/>
    <property type="evidence" value="ECO:0000318"/>
    <property type="project" value="GO_Central"/>
</dbReference>
<dbReference type="GO" id="GO:0070888">
    <property type="term" value="F:E-box binding"/>
    <property type="evidence" value="ECO:0000318"/>
    <property type="project" value="GO_Central"/>
</dbReference>
<dbReference type="GO" id="GO:0046983">
    <property type="term" value="F:protein dimerization activity"/>
    <property type="evidence" value="ECO:0007669"/>
    <property type="project" value="InterPro"/>
</dbReference>
<dbReference type="GO" id="GO:0035881">
    <property type="term" value="P:amacrine cell differentiation"/>
    <property type="evidence" value="ECO:0000250"/>
    <property type="project" value="UniProtKB"/>
</dbReference>
<dbReference type="GO" id="GO:0061564">
    <property type="term" value="P:axon development"/>
    <property type="evidence" value="ECO:0000318"/>
    <property type="project" value="GO_Central"/>
</dbReference>
<dbReference type="GO" id="GO:0043010">
    <property type="term" value="P:camera-type eye development"/>
    <property type="evidence" value="ECO:0000318"/>
    <property type="project" value="GO_Central"/>
</dbReference>
<dbReference type="GO" id="GO:0045597">
    <property type="term" value="P:positive regulation of cell differentiation"/>
    <property type="evidence" value="ECO:0000250"/>
    <property type="project" value="UniProtKB"/>
</dbReference>
<dbReference type="GO" id="GO:0045944">
    <property type="term" value="P:positive regulation of transcription by RNA polymerase II"/>
    <property type="evidence" value="ECO:0000318"/>
    <property type="project" value="GO_Central"/>
</dbReference>
<dbReference type="CDD" id="cd19721">
    <property type="entry name" value="bHLH_TS_NeuroD4_ATOH3"/>
    <property type="match status" value="1"/>
</dbReference>
<dbReference type="FunFam" id="4.10.280.10:FF:000006">
    <property type="entry name" value="Neurogenic differentiation factor"/>
    <property type="match status" value="1"/>
</dbReference>
<dbReference type="Gene3D" id="4.10.280.10">
    <property type="entry name" value="Helix-loop-helix DNA-binding domain"/>
    <property type="match status" value="1"/>
</dbReference>
<dbReference type="InterPro" id="IPR011598">
    <property type="entry name" value="bHLH_dom"/>
</dbReference>
<dbReference type="InterPro" id="IPR050359">
    <property type="entry name" value="bHLH_transcription_factors"/>
</dbReference>
<dbReference type="InterPro" id="IPR036638">
    <property type="entry name" value="HLH_DNA-bd_sf"/>
</dbReference>
<dbReference type="InterPro" id="IPR022575">
    <property type="entry name" value="NeuroD_DUF"/>
</dbReference>
<dbReference type="InterPro" id="IPR016637">
    <property type="entry name" value="TF_bHLH_NeuroD"/>
</dbReference>
<dbReference type="PANTHER" id="PTHR19290">
    <property type="entry name" value="BASIC HELIX-LOOP-HELIX PROTEIN NEUROGENIN-RELATED"/>
    <property type="match status" value="1"/>
</dbReference>
<dbReference type="PANTHER" id="PTHR19290:SF86">
    <property type="entry name" value="NEUROGENIC DIFFERENTIATION FACTOR 4"/>
    <property type="match status" value="1"/>
</dbReference>
<dbReference type="Pfam" id="PF00010">
    <property type="entry name" value="HLH"/>
    <property type="match status" value="1"/>
</dbReference>
<dbReference type="Pfam" id="PF12533">
    <property type="entry name" value="Neuro_bHLH"/>
    <property type="match status" value="1"/>
</dbReference>
<dbReference type="PIRSF" id="PIRSF015618">
    <property type="entry name" value="bHLH_NeuroD"/>
    <property type="match status" value="1"/>
</dbReference>
<dbReference type="SMART" id="SM00353">
    <property type="entry name" value="HLH"/>
    <property type="match status" value="1"/>
</dbReference>
<dbReference type="SUPFAM" id="SSF47459">
    <property type="entry name" value="HLH, helix-loop-helix DNA-binding domain"/>
    <property type="match status" value="1"/>
</dbReference>
<dbReference type="PROSITE" id="PS50888">
    <property type="entry name" value="BHLH"/>
    <property type="match status" value="1"/>
</dbReference>
<comment type="function">
    <text evidence="1">Probably acts as a transcriptional activator. Mediates neuronal differentiation. Required for the regulation of amacrine cell fate specification in the retina (By similarity).</text>
</comment>
<comment type="subunit">
    <text evidence="1">Efficient DNA binding requires dimerization with another bHLH protein.</text>
</comment>
<comment type="subcellular location">
    <subcellularLocation>
        <location evidence="3">Nucleus</location>
    </subcellularLocation>
</comment>
<comment type="tissue specificity">
    <text evidence="5">Expressed in both the developing central nervous system and peripheral nervous system.</text>
</comment>
<comment type="developmental stage">
    <text evidence="5">Expression in the developing nervous system is transient and restricted to cells lining the ventricular zone that have ceased proliferation but have not yet begun to migrate into the outer layers. In retina, neurom is also transiently expressed in cells as they withdraw from the mitotic cycle, but persists in horizontal and bipolar neurons until full differentiation. In the peripheral nervous system, its expression closely follows cell proliferation.</text>
</comment>
<comment type="PTM">
    <text evidence="1">Serine or threonine phosphorylation within the basic region may regulate neurogenic activity.</text>
</comment>
<feature type="chain" id="PRO_0000127395" description="Neurogenic differentiation factor 4">
    <location>
        <begin position="1"/>
        <end position="330"/>
    </location>
</feature>
<feature type="domain" description="bHLH" evidence="3">
    <location>
        <begin position="87"/>
        <end position="139"/>
    </location>
</feature>
<feature type="region of interest" description="Disordered" evidence="4">
    <location>
        <begin position="1"/>
        <end position="79"/>
    </location>
</feature>
<feature type="region of interest" description="Leucine-zipper">
    <location>
        <begin position="162"/>
        <end position="183"/>
    </location>
</feature>
<feature type="short sequence motif" description="Nuclear localization signal" evidence="2">
    <location>
        <begin position="73"/>
        <end position="79"/>
    </location>
</feature>
<feature type="compositionally biased region" description="Basic and acidic residues" evidence="4">
    <location>
        <begin position="25"/>
        <end position="35"/>
    </location>
</feature>
<feature type="compositionally biased region" description="Acidic residues" evidence="4">
    <location>
        <begin position="52"/>
        <end position="64"/>
    </location>
</feature>
<feature type="compositionally biased region" description="Basic residues" evidence="4">
    <location>
        <begin position="67"/>
        <end position="79"/>
    </location>
</feature>
<name>NDF4_CHICK</name>
<keyword id="KW-0010">Activator</keyword>
<keyword id="KW-0217">Developmental protein</keyword>
<keyword id="KW-0221">Differentiation</keyword>
<keyword id="KW-0238">DNA-binding</keyword>
<keyword id="KW-0524">Neurogenesis</keyword>
<keyword id="KW-0539">Nucleus</keyword>
<keyword id="KW-0597">Phosphoprotein</keyword>
<keyword id="KW-1185">Reference proteome</keyword>
<keyword id="KW-0804">Transcription</keyword>
<keyword id="KW-0805">Transcription regulation</keyword>
<protein>
    <recommendedName>
        <fullName>Neurogenic differentiation factor 4</fullName>
        <shortName>NeuroD4</shortName>
    </recommendedName>
    <alternativeName>
        <fullName>NeuroM</fullName>
    </alternativeName>
</protein>
<gene>
    <name type="primary">NEUROD4</name>
</gene>
<evidence type="ECO:0000250" key="1"/>
<evidence type="ECO:0000255" key="2"/>
<evidence type="ECO:0000255" key="3">
    <source>
        <dbReference type="PROSITE-ProRule" id="PRU00981"/>
    </source>
</evidence>
<evidence type="ECO:0000256" key="4">
    <source>
        <dbReference type="SAM" id="MobiDB-lite"/>
    </source>
</evidence>
<evidence type="ECO:0000269" key="5">
    <source>
    </source>
</evidence>
<organism>
    <name type="scientific">Gallus gallus</name>
    <name type="common">Chicken</name>
    <dbReference type="NCBI Taxonomy" id="9031"/>
    <lineage>
        <taxon>Eukaryota</taxon>
        <taxon>Metazoa</taxon>
        <taxon>Chordata</taxon>
        <taxon>Craniata</taxon>
        <taxon>Vertebrata</taxon>
        <taxon>Euteleostomi</taxon>
        <taxon>Archelosauria</taxon>
        <taxon>Archosauria</taxon>
        <taxon>Dinosauria</taxon>
        <taxon>Saurischia</taxon>
        <taxon>Theropoda</taxon>
        <taxon>Coelurosauria</taxon>
        <taxon>Aves</taxon>
        <taxon>Neognathae</taxon>
        <taxon>Galloanserae</taxon>
        <taxon>Galliformes</taxon>
        <taxon>Phasianidae</taxon>
        <taxon>Phasianinae</taxon>
        <taxon>Gallus</taxon>
    </lineage>
</organism>
<proteinExistence type="evidence at transcript level"/>
<accession>P79766</accession>
<sequence>MTKTYTKAKEMAELVGTQGWMDDALSSKDELKAENGRPGPFGLVAGLNEEHDSIEEEEEEEDDGEKPKRRGPKKKKMTKARLERFRARRVKANARERTRMHGLNDALDNLRRVMPCYSKTQKLSKIETLRLARNYIWALSEVLETGQTPEGKSFVEMLCKGLSQPTSNLVAGCLQLGPQTLFLEKHEEKTPGCESAISSHSFTYQSPGLPSPPYGSMETHLLHLKPPAFKSLVDASFGNPPDCTTPPYEGPLTPPLSISGNFSLKQDGSPDLDKPYAFMAHYPSVSLAGAHGHPTHFQNAVPRYEIPIDMSYESYPHHVAGPQLNAIFNE</sequence>
<reference key="1">
    <citation type="journal article" date="1997" name="Development">
        <title>NeuroM, a neural helix-loop-helix transcription factor, defines a new transition stage in neurogenesis.</title>
        <authorList>
            <person name="Roztocil T."/>
            <person name="Matter-Sadzinski L."/>
            <person name="Alliod C."/>
            <person name="Ballivet M."/>
            <person name="Matter J.-M."/>
        </authorList>
    </citation>
    <scope>NUCLEOTIDE SEQUENCE [MRNA]</scope>
    <scope>TISSUE SPECIFICITY</scope>
    <scope>DEVELOPMENTAL STAGE</scope>
    <source>
        <strain>White leghorn</strain>
        <tissue>Embryonic retina</tissue>
    </source>
</reference>